<protein>
    <recommendedName>
        <fullName evidence="6">Acetoacetyl-CoA reductase</fullName>
        <ecNumber evidence="8">1.1.1.36</ecNumber>
    </recommendedName>
</protein>
<sequence length="240" mass="25333">MLSLGLEDKVIVVTGGNRGIGAAIVKLLQEMGAKVAFTDLATDGGNTEALGVVANVTDLESMTAAAAEITDKLGPVYGVVANAGITKDNFFPKLTPADWDAVLNVNLKGVAYSIKPFIEGMYERKAGSIVAISSISGERGNVGQTNYSATKAGVIGMMKSLAREGARYGVRANAVAPGFIDTEMTLAIREDIREKITKEIPFRRFGKPEEIAWAVAFLLSPVASSYVTGEVLRVNGAHHT</sequence>
<organism>
    <name type="scientific">Synechocystis sp. (strain ATCC 27184 / PCC 6803 / Kazusa)</name>
    <dbReference type="NCBI Taxonomy" id="1111708"/>
    <lineage>
        <taxon>Bacteria</taxon>
        <taxon>Bacillati</taxon>
        <taxon>Cyanobacteriota</taxon>
        <taxon>Cyanophyceae</taxon>
        <taxon>Synechococcales</taxon>
        <taxon>Merismopediaceae</taxon>
        <taxon>Synechocystis</taxon>
    </lineage>
</organism>
<proteinExistence type="evidence at protein level"/>
<dbReference type="EC" id="1.1.1.36" evidence="8"/>
<dbReference type="EMBL" id="BA000022">
    <property type="protein sequence ID" value="BAA17883.1"/>
    <property type="molecule type" value="Genomic_DNA"/>
</dbReference>
<dbReference type="PIR" id="S75021">
    <property type="entry name" value="S75021"/>
</dbReference>
<dbReference type="PDB" id="4RZI">
    <property type="method" value="X-ray"/>
    <property type="resolution" value="2.89 A"/>
    <property type="chains" value="A/B/C=1-240"/>
</dbReference>
<dbReference type="PDBsum" id="4RZI"/>
<dbReference type="SMR" id="P73826"/>
<dbReference type="STRING" id="1148.gene:10498752"/>
<dbReference type="PaxDb" id="1148-1652966"/>
<dbReference type="EnsemblBacteria" id="BAA17883">
    <property type="protein sequence ID" value="BAA17883"/>
    <property type="gene ID" value="BAA17883"/>
</dbReference>
<dbReference type="KEGG" id="syn:slr1994"/>
<dbReference type="eggNOG" id="COG1028">
    <property type="taxonomic scope" value="Bacteria"/>
</dbReference>
<dbReference type="InParanoid" id="P73826"/>
<dbReference type="PhylomeDB" id="P73826"/>
<dbReference type="UniPathway" id="UPA00917"/>
<dbReference type="EvolutionaryTrace" id="P73826"/>
<dbReference type="Proteomes" id="UP000001425">
    <property type="component" value="Chromosome"/>
</dbReference>
<dbReference type="GO" id="GO:0018454">
    <property type="term" value="F:acetoacetyl-CoA reductase activity"/>
    <property type="evidence" value="ECO:0007669"/>
    <property type="project" value="UniProtKB-EC"/>
</dbReference>
<dbReference type="GO" id="GO:0016616">
    <property type="term" value="F:oxidoreductase activity, acting on the CH-OH group of donors, NAD or NADP as acceptor"/>
    <property type="evidence" value="ECO:0000318"/>
    <property type="project" value="GO_Central"/>
</dbReference>
<dbReference type="GO" id="GO:0030497">
    <property type="term" value="P:fatty acid elongation"/>
    <property type="evidence" value="ECO:0000318"/>
    <property type="project" value="GO_Central"/>
</dbReference>
<dbReference type="GO" id="GO:0042619">
    <property type="term" value="P:poly-hydroxybutyrate biosynthetic process"/>
    <property type="evidence" value="ECO:0007669"/>
    <property type="project" value="UniProtKB-KW"/>
</dbReference>
<dbReference type="CDD" id="cd05333">
    <property type="entry name" value="BKR_SDR_c"/>
    <property type="match status" value="1"/>
</dbReference>
<dbReference type="FunFam" id="3.40.50.720:FF:001575">
    <property type="entry name" value="Acetoacetyl-CoA reductase"/>
    <property type="match status" value="1"/>
</dbReference>
<dbReference type="Gene3D" id="3.40.50.720">
    <property type="entry name" value="NAD(P)-binding Rossmann-like Domain"/>
    <property type="match status" value="1"/>
</dbReference>
<dbReference type="InterPro" id="IPR036291">
    <property type="entry name" value="NAD(P)-bd_dom_sf"/>
</dbReference>
<dbReference type="InterPro" id="IPR049956">
    <property type="entry name" value="PhaB"/>
</dbReference>
<dbReference type="InterPro" id="IPR020904">
    <property type="entry name" value="Sc_DH/Rdtase_CS"/>
</dbReference>
<dbReference type="InterPro" id="IPR050259">
    <property type="entry name" value="SDR"/>
</dbReference>
<dbReference type="InterPro" id="IPR002347">
    <property type="entry name" value="SDR_fam"/>
</dbReference>
<dbReference type="NCBIfam" id="NF042966">
    <property type="entry name" value="AcAcCoAred_PhaB"/>
    <property type="match status" value="1"/>
</dbReference>
<dbReference type="PANTHER" id="PTHR42879">
    <property type="entry name" value="3-OXOACYL-(ACYL-CARRIER-PROTEIN) REDUCTASE"/>
    <property type="match status" value="1"/>
</dbReference>
<dbReference type="PANTHER" id="PTHR42879:SF2">
    <property type="entry name" value="3-OXOACYL-[ACYL-CARRIER-PROTEIN] REDUCTASE FABG"/>
    <property type="match status" value="1"/>
</dbReference>
<dbReference type="Pfam" id="PF13561">
    <property type="entry name" value="adh_short_C2"/>
    <property type="match status" value="1"/>
</dbReference>
<dbReference type="PRINTS" id="PR00081">
    <property type="entry name" value="GDHRDH"/>
</dbReference>
<dbReference type="PRINTS" id="PR00080">
    <property type="entry name" value="SDRFAMILY"/>
</dbReference>
<dbReference type="SMART" id="SM00822">
    <property type="entry name" value="PKS_KR"/>
    <property type="match status" value="1"/>
</dbReference>
<dbReference type="SUPFAM" id="SSF51735">
    <property type="entry name" value="NAD(P)-binding Rossmann-fold domains"/>
    <property type="match status" value="1"/>
</dbReference>
<dbReference type="PROSITE" id="PS00061">
    <property type="entry name" value="ADH_SHORT"/>
    <property type="match status" value="1"/>
</dbReference>
<name>PHAB_SYNY3</name>
<evidence type="ECO:0000250" key="1">
    <source>
        <dbReference type="UniProtKB" id="P14697"/>
    </source>
</evidence>
<evidence type="ECO:0000255" key="2">
    <source>
        <dbReference type="PROSITE-ProRule" id="PRU10001"/>
    </source>
</evidence>
<evidence type="ECO:0000269" key="3">
    <source>
    </source>
</evidence>
<evidence type="ECO:0000269" key="4">
    <source>
    </source>
</evidence>
<evidence type="ECO:0000303" key="5">
    <source>
    </source>
</evidence>
<evidence type="ECO:0000303" key="6">
    <source>
    </source>
</evidence>
<evidence type="ECO:0000305" key="7"/>
<evidence type="ECO:0000305" key="8">
    <source>
    </source>
</evidence>
<evidence type="ECO:0007744" key="9">
    <source>
        <dbReference type="PDB" id="4RZI"/>
    </source>
</evidence>
<evidence type="ECO:0007829" key="10">
    <source>
        <dbReference type="PDB" id="4RZI"/>
    </source>
</evidence>
<gene>
    <name evidence="5" type="primary">phaB</name>
    <name type="ordered locus">slr1994</name>
</gene>
<keyword id="KW-0002">3D-structure</keyword>
<keyword id="KW-0521">NADP</keyword>
<keyword id="KW-0560">Oxidoreductase</keyword>
<keyword id="KW-0583">PHB biosynthesis</keyword>
<keyword id="KW-1185">Reference proteome</keyword>
<reference key="1">
    <citation type="journal article" date="1996" name="DNA Res.">
        <title>Sequence analysis of the genome of the unicellular cyanobacterium Synechocystis sp. strain PCC6803. II. Sequence determination of the entire genome and assignment of potential protein-coding regions.</title>
        <authorList>
            <person name="Kaneko T."/>
            <person name="Sato S."/>
            <person name="Kotani H."/>
            <person name="Tanaka A."/>
            <person name="Asamizu E."/>
            <person name="Nakamura Y."/>
            <person name="Miyajima N."/>
            <person name="Hirosawa M."/>
            <person name="Sugiura M."/>
            <person name="Sasamoto S."/>
            <person name="Kimura T."/>
            <person name="Hosouchi T."/>
            <person name="Matsuno A."/>
            <person name="Muraki A."/>
            <person name="Nakazaki N."/>
            <person name="Naruo K."/>
            <person name="Okumura S."/>
            <person name="Shimpo S."/>
            <person name="Takeuchi C."/>
            <person name="Wada T."/>
            <person name="Watanabe A."/>
            <person name="Yamada M."/>
            <person name="Yasuda M."/>
            <person name="Tabata S."/>
        </authorList>
    </citation>
    <scope>NUCLEOTIDE SEQUENCE [LARGE SCALE GENOMIC DNA]</scope>
    <source>
        <strain>ATCC 27184 / PCC 6803 / Kazusa</strain>
    </source>
</reference>
<reference key="2">
    <citation type="journal article" date="2000" name="Appl. Environ. Microbiol.">
        <title>Identification and analysis of the polyhydroxyalkanoate-specific beta-ketothiolase and acetoacetyl coenzyme A reductase genes in the cyanobacterium Synechocystis sp. strain PCC6803.</title>
        <authorList>
            <person name="Taroncher-Oldenburg G."/>
            <person name="Nishina K."/>
            <person name="Stephanopoulos G."/>
        </authorList>
    </citation>
    <scope>FUNCTION</scope>
    <scope>DISRUPTION PHENOTYPE</scope>
    <scope>EXPRESSION IN E.COLI</scope>
    <source>
        <strain>ATCC 27184 / PCC 6803 / N-1</strain>
    </source>
</reference>
<reference evidence="9" key="3">
    <citation type="journal article" date="2015" name="FEBS Lett.">
        <title>Structure-directed construction of a high-performance version of the enzyme FabG from the photosynthetic microorganism Synechocystis sp. PCC 6803.</title>
        <authorList>
            <person name="Liu Y."/>
            <person name="Feng Y."/>
            <person name="Cao X."/>
            <person name="Li X."/>
            <person name="Xue S."/>
        </authorList>
    </citation>
    <scope>X-RAY CRYSTALLOGRAPHY (2.89 ANGSTROMS)</scope>
    <scope>FUNCTION</scope>
    <scope>PATHWAY</scope>
    <scope>ACTIVE SITE</scope>
    <scope>MUTAGENESIS OF SER-134; TYR-147 AND LYS-151</scope>
    <source>
        <strain>ATCC 27184 / PCC 6803 / N-1</strain>
    </source>
</reference>
<feature type="chain" id="PRO_0000054692" description="Acetoacetyl-CoA reductase">
    <location>
        <begin position="1"/>
        <end position="240"/>
    </location>
</feature>
<feature type="active site" description="Proton acceptor" evidence="2 8">
    <location>
        <position position="147"/>
    </location>
</feature>
<feature type="binding site" evidence="1">
    <location>
        <begin position="18"/>
        <end position="20"/>
    </location>
    <ligand>
        <name>NADP(+)</name>
        <dbReference type="ChEBI" id="CHEBI:58349"/>
    </ligand>
</feature>
<feature type="binding site" evidence="1">
    <location>
        <begin position="82"/>
        <end position="86"/>
    </location>
    <ligand>
        <name>NADP(+)</name>
        <dbReference type="ChEBI" id="CHEBI:58349"/>
    </ligand>
</feature>
<feature type="binding site" evidence="8">
    <location>
        <position position="134"/>
    </location>
    <ligand>
        <name>substrate</name>
    </ligand>
</feature>
<feature type="binding site" evidence="1">
    <location>
        <begin position="141"/>
        <end position="144"/>
    </location>
    <ligand>
        <name>substrate</name>
    </ligand>
</feature>
<feature type="binding site" evidence="1">
    <location>
        <begin position="177"/>
        <end position="180"/>
    </location>
    <ligand>
        <name>NADP(+)</name>
        <dbReference type="ChEBI" id="CHEBI:58349"/>
    </ligand>
</feature>
<feature type="binding site" evidence="1">
    <location>
        <begin position="178"/>
        <end position="179"/>
    </location>
    <ligand>
        <name>substrate</name>
    </ligand>
</feature>
<feature type="mutagenesis site" description="12% enzymatic activity." evidence="4">
    <original>S</original>
    <variation>A</variation>
    <location>
        <position position="134"/>
    </location>
</feature>
<feature type="mutagenesis site" description="No enzymatic activity." evidence="4">
    <original>Y</original>
    <variation>A</variation>
    <location>
        <position position="147"/>
    </location>
</feature>
<feature type="mutagenesis site" description="5% enzymatic activity." evidence="4">
    <original>K</original>
    <variation>A</variation>
    <location>
        <position position="151"/>
    </location>
</feature>
<feature type="turn" evidence="10">
    <location>
        <begin position="5"/>
        <end position="8"/>
    </location>
</feature>
<feature type="strand" evidence="10">
    <location>
        <begin position="10"/>
        <end position="14"/>
    </location>
</feature>
<feature type="helix" evidence="10">
    <location>
        <begin position="19"/>
        <end position="29"/>
    </location>
</feature>
<feature type="turn" evidence="10">
    <location>
        <begin position="30"/>
        <end position="32"/>
    </location>
</feature>
<feature type="strand" evidence="10">
    <location>
        <begin position="34"/>
        <end position="40"/>
    </location>
</feature>
<feature type="strand" evidence="10">
    <location>
        <begin position="51"/>
        <end position="53"/>
    </location>
</feature>
<feature type="helix" evidence="10">
    <location>
        <begin position="59"/>
        <end position="73"/>
    </location>
</feature>
<feature type="strand" evidence="10">
    <location>
        <begin position="78"/>
        <end position="81"/>
    </location>
</feature>
<feature type="helix" evidence="10">
    <location>
        <begin position="91"/>
        <end position="93"/>
    </location>
</feature>
<feature type="helix" evidence="10">
    <location>
        <begin position="96"/>
        <end position="106"/>
    </location>
</feature>
<feature type="helix" evidence="10">
    <location>
        <begin position="108"/>
        <end position="124"/>
    </location>
</feature>
<feature type="strand" evidence="10">
    <location>
        <begin position="127"/>
        <end position="132"/>
    </location>
</feature>
<feature type="helix" evidence="10">
    <location>
        <begin position="135"/>
        <end position="139"/>
    </location>
</feature>
<feature type="helix" evidence="10">
    <location>
        <begin position="145"/>
        <end position="165"/>
    </location>
</feature>
<feature type="helix" evidence="10">
    <location>
        <begin position="166"/>
        <end position="168"/>
    </location>
</feature>
<feature type="strand" evidence="10">
    <location>
        <begin position="170"/>
        <end position="177"/>
    </location>
</feature>
<feature type="helix" evidence="10">
    <location>
        <begin position="185"/>
        <end position="187"/>
    </location>
</feature>
<feature type="helix" evidence="10">
    <location>
        <begin position="190"/>
        <end position="197"/>
    </location>
</feature>
<feature type="helix" evidence="10">
    <location>
        <begin position="208"/>
        <end position="219"/>
    </location>
</feature>
<feature type="turn" evidence="10">
    <location>
        <begin position="221"/>
        <end position="223"/>
    </location>
</feature>
<feature type="strand" evidence="10">
    <location>
        <begin position="231"/>
        <end position="235"/>
    </location>
</feature>
<accession>P73826</accession>
<comment type="function">
    <text evidence="3 8">Catalyzes the reduction of acetoacetyl-CoA to (R)-3-hydroxybutyryl-CoA (PubMed:26358291). When expressed in E.coli with Synechocystis PhaA, PhaC and PhaE confers the ability to synthesize up to 12% (w/w) poly(3-hydroxybutyrate) (PHB) depending on the carbon source (PubMed:11010896).</text>
</comment>
<comment type="catalytic activity">
    <reaction evidence="8">
        <text>a (3R)-3-hydroxyacyl-CoA + NADP(+) = a 3-oxoacyl-CoA + NADPH + H(+)</text>
        <dbReference type="Rhea" id="RHEA:22256"/>
        <dbReference type="ChEBI" id="CHEBI:15378"/>
        <dbReference type="ChEBI" id="CHEBI:57319"/>
        <dbReference type="ChEBI" id="CHEBI:57783"/>
        <dbReference type="ChEBI" id="CHEBI:58349"/>
        <dbReference type="ChEBI" id="CHEBI:90726"/>
        <dbReference type="EC" id="1.1.1.36"/>
    </reaction>
</comment>
<comment type="pathway">
    <text evidence="3">Biopolymer metabolism; poly-(R)-3-hydroxybutanoate biosynthesis.</text>
</comment>
<comment type="disruption phenotype">
    <text evidence="3">Double deletion of phaA and phaB leads to loss of synthesis of PHB, no visible growth phenotype.</text>
</comment>
<comment type="biotechnology">
    <text evidence="7">Poly(3-hydroxyalkanoic acids) (PHA), of which PHB is among the most common compounds, are prokaryotic intracellular storage compounds with potential uses as a renewable, biodegradable thermoplastic. Cyanobacterial PHB synthesis is particularly attractive as cyanobacteria use CO(2) as the carbon source.</text>
</comment>
<comment type="miscellaneous">
    <text evidence="7">Nitrogen-free medium induces chlorosis in Synechocystis, leading to the degradation of the photosynthetic apparatus and concomitant accumulation of cytoplasmic polyhydroxyalkanoic acid (PHA) granules which in this cyanobacterium are composed of PHB.</text>
</comment>
<comment type="similarity">
    <text evidence="7">Belongs to the short-chain dehydrogenases/reductases (SDR) family.</text>
</comment>